<comment type="similarity">
    <text evidence="1">Belongs to the universal ribosomal protein uS9 family.</text>
</comment>
<keyword id="KW-0687">Ribonucleoprotein</keyword>
<keyword id="KW-0689">Ribosomal protein</keyword>
<protein>
    <recommendedName>
        <fullName evidence="1">Small ribosomal subunit protein uS9</fullName>
    </recommendedName>
    <alternativeName>
        <fullName evidence="3">30S ribosomal protein S9</fullName>
    </alternativeName>
</protein>
<reference key="1">
    <citation type="journal article" date="2003" name="Nature">
        <title>The genome of a motile marine Synechococcus.</title>
        <authorList>
            <person name="Palenik B."/>
            <person name="Brahamsha B."/>
            <person name="Larimer F.W."/>
            <person name="Land M.L."/>
            <person name="Hauser L."/>
            <person name="Chain P."/>
            <person name="Lamerdin J.E."/>
            <person name="Regala W."/>
            <person name="Allen E.E."/>
            <person name="McCarren J."/>
            <person name="Paulsen I.T."/>
            <person name="Dufresne A."/>
            <person name="Partensky F."/>
            <person name="Webb E.A."/>
            <person name="Waterbury J."/>
        </authorList>
    </citation>
    <scope>NUCLEOTIDE SEQUENCE [LARGE SCALE GENOMIC DNA]</scope>
    <source>
        <strain>WH8102</strain>
    </source>
</reference>
<dbReference type="EMBL" id="BX569694">
    <property type="protein sequence ID" value="CAE08609.1"/>
    <property type="molecule type" value="Genomic_DNA"/>
</dbReference>
<dbReference type="RefSeq" id="WP_011128951.1">
    <property type="nucleotide sequence ID" value="NC_005070.1"/>
</dbReference>
<dbReference type="SMR" id="Q7U4H4"/>
<dbReference type="STRING" id="84588.SYNW2094"/>
<dbReference type="KEGG" id="syw:SYNW2094"/>
<dbReference type="eggNOG" id="COG0103">
    <property type="taxonomic scope" value="Bacteria"/>
</dbReference>
<dbReference type="HOGENOM" id="CLU_046483_2_1_3"/>
<dbReference type="Proteomes" id="UP000001422">
    <property type="component" value="Chromosome"/>
</dbReference>
<dbReference type="GO" id="GO:0022627">
    <property type="term" value="C:cytosolic small ribosomal subunit"/>
    <property type="evidence" value="ECO:0007669"/>
    <property type="project" value="TreeGrafter"/>
</dbReference>
<dbReference type="GO" id="GO:0003723">
    <property type="term" value="F:RNA binding"/>
    <property type="evidence" value="ECO:0007669"/>
    <property type="project" value="TreeGrafter"/>
</dbReference>
<dbReference type="GO" id="GO:0003735">
    <property type="term" value="F:structural constituent of ribosome"/>
    <property type="evidence" value="ECO:0007669"/>
    <property type="project" value="InterPro"/>
</dbReference>
<dbReference type="GO" id="GO:0006412">
    <property type="term" value="P:translation"/>
    <property type="evidence" value="ECO:0007669"/>
    <property type="project" value="UniProtKB-UniRule"/>
</dbReference>
<dbReference type="FunFam" id="3.30.230.10:FF:000001">
    <property type="entry name" value="30S ribosomal protein S9"/>
    <property type="match status" value="1"/>
</dbReference>
<dbReference type="Gene3D" id="3.30.230.10">
    <property type="match status" value="1"/>
</dbReference>
<dbReference type="HAMAP" id="MF_00532_B">
    <property type="entry name" value="Ribosomal_uS9_B"/>
    <property type="match status" value="1"/>
</dbReference>
<dbReference type="InterPro" id="IPR020568">
    <property type="entry name" value="Ribosomal_Su5_D2-typ_SF"/>
</dbReference>
<dbReference type="InterPro" id="IPR000754">
    <property type="entry name" value="Ribosomal_uS9"/>
</dbReference>
<dbReference type="InterPro" id="IPR023035">
    <property type="entry name" value="Ribosomal_uS9_bac/plastid"/>
</dbReference>
<dbReference type="InterPro" id="IPR020574">
    <property type="entry name" value="Ribosomal_uS9_CS"/>
</dbReference>
<dbReference type="InterPro" id="IPR014721">
    <property type="entry name" value="Ribsml_uS5_D2-typ_fold_subgr"/>
</dbReference>
<dbReference type="NCBIfam" id="NF001099">
    <property type="entry name" value="PRK00132.1"/>
    <property type="match status" value="1"/>
</dbReference>
<dbReference type="PANTHER" id="PTHR21569">
    <property type="entry name" value="RIBOSOMAL PROTEIN S9"/>
    <property type="match status" value="1"/>
</dbReference>
<dbReference type="PANTHER" id="PTHR21569:SF1">
    <property type="entry name" value="SMALL RIBOSOMAL SUBUNIT PROTEIN US9M"/>
    <property type="match status" value="1"/>
</dbReference>
<dbReference type="Pfam" id="PF00380">
    <property type="entry name" value="Ribosomal_S9"/>
    <property type="match status" value="1"/>
</dbReference>
<dbReference type="SUPFAM" id="SSF54211">
    <property type="entry name" value="Ribosomal protein S5 domain 2-like"/>
    <property type="match status" value="1"/>
</dbReference>
<dbReference type="PROSITE" id="PS00360">
    <property type="entry name" value="RIBOSOMAL_S9"/>
    <property type="match status" value="1"/>
</dbReference>
<accession>Q7U4H4</accession>
<sequence>MSSNSVVYWGTGRRKTSVARVRLVPGNGTITINGRPGDNYLNYNPAYIAAVKAPLETLGLGTEYDILVNVHGGGLTGQSGAIKQGAARALCELSADNRKPLKTEGHLSRDPRAKERRKYGLKKARKAPQFSKR</sequence>
<evidence type="ECO:0000255" key="1">
    <source>
        <dbReference type="HAMAP-Rule" id="MF_00532"/>
    </source>
</evidence>
<evidence type="ECO:0000256" key="2">
    <source>
        <dbReference type="SAM" id="MobiDB-lite"/>
    </source>
</evidence>
<evidence type="ECO:0000305" key="3"/>
<organism>
    <name type="scientific">Parasynechococcus marenigrum (strain WH8102)</name>
    <dbReference type="NCBI Taxonomy" id="84588"/>
    <lineage>
        <taxon>Bacteria</taxon>
        <taxon>Bacillati</taxon>
        <taxon>Cyanobacteriota</taxon>
        <taxon>Cyanophyceae</taxon>
        <taxon>Synechococcales</taxon>
        <taxon>Prochlorococcaceae</taxon>
        <taxon>Parasynechococcus</taxon>
        <taxon>Parasynechococcus marenigrum</taxon>
    </lineage>
</organism>
<proteinExistence type="inferred from homology"/>
<feature type="chain" id="PRO_0000111427" description="Small ribosomal subunit protein uS9">
    <location>
        <begin position="1"/>
        <end position="133"/>
    </location>
</feature>
<feature type="region of interest" description="Disordered" evidence="2">
    <location>
        <begin position="98"/>
        <end position="133"/>
    </location>
</feature>
<feature type="compositionally biased region" description="Basic and acidic residues" evidence="2">
    <location>
        <begin position="98"/>
        <end position="113"/>
    </location>
</feature>
<feature type="compositionally biased region" description="Basic residues" evidence="2">
    <location>
        <begin position="114"/>
        <end position="133"/>
    </location>
</feature>
<name>RS9_PARMW</name>
<gene>
    <name evidence="1" type="primary">rpsI</name>
    <name evidence="1" type="synonym">rps9</name>
    <name type="ordered locus">SYNW2094</name>
</gene>